<proteinExistence type="evidence at protein level"/>
<dbReference type="EC" id="3.2.1.81" evidence="3"/>
<dbReference type="EMBL" id="AB124837">
    <property type="protein sequence ID" value="BAD29947.1"/>
    <property type="molecule type" value="Genomic_DNA"/>
</dbReference>
<dbReference type="EMBL" id="AB516430">
    <property type="protein sequence ID" value="BAK08910.1"/>
    <property type="molecule type" value="Genomic_DNA"/>
</dbReference>
<dbReference type="RefSeq" id="WP_074903249.1">
    <property type="nucleotide sequence ID" value="NZ_CP130317.1"/>
</dbReference>
<dbReference type="PDB" id="3WZ1">
    <property type="method" value="X-ray"/>
    <property type="resolution" value="1.60 A"/>
    <property type="chains" value="A=19-300"/>
</dbReference>
<dbReference type="PDBsum" id="3WZ1"/>
<dbReference type="SMR" id="Q6F4N4"/>
<dbReference type="CAZy" id="CBM6">
    <property type="family name" value="Carbohydrate-Binding Module Family 6"/>
</dbReference>
<dbReference type="CAZy" id="GH16">
    <property type="family name" value="Glycoside Hydrolase Family 16"/>
</dbReference>
<dbReference type="BRENDA" id="3.2.1.81">
    <property type="organism ID" value="11749"/>
</dbReference>
<dbReference type="EvolutionaryTrace" id="Q6F4N4"/>
<dbReference type="GO" id="GO:0042597">
    <property type="term" value="C:periplasmic space"/>
    <property type="evidence" value="ECO:0007669"/>
    <property type="project" value="UniProtKB-SubCell"/>
</dbReference>
<dbReference type="GO" id="GO:0033916">
    <property type="term" value="F:beta-agarase activity"/>
    <property type="evidence" value="ECO:0007669"/>
    <property type="project" value="InterPro"/>
</dbReference>
<dbReference type="GO" id="GO:0030246">
    <property type="term" value="F:carbohydrate binding"/>
    <property type="evidence" value="ECO:0007669"/>
    <property type="project" value="InterPro"/>
</dbReference>
<dbReference type="GO" id="GO:0005975">
    <property type="term" value="P:carbohydrate metabolic process"/>
    <property type="evidence" value="ECO:0007669"/>
    <property type="project" value="InterPro"/>
</dbReference>
<dbReference type="CDD" id="cd04079">
    <property type="entry name" value="CBM6_agarase-like"/>
    <property type="match status" value="1"/>
</dbReference>
<dbReference type="CDD" id="cd02178">
    <property type="entry name" value="GH16_beta_agarase"/>
    <property type="match status" value="1"/>
</dbReference>
<dbReference type="Gene3D" id="2.60.120.200">
    <property type="match status" value="1"/>
</dbReference>
<dbReference type="Gene3D" id="2.60.120.260">
    <property type="entry name" value="Galactose-binding domain-like"/>
    <property type="match status" value="1"/>
</dbReference>
<dbReference type="InterPro" id="IPR016287">
    <property type="entry name" value="Beta_agarase"/>
</dbReference>
<dbReference type="InterPro" id="IPR005084">
    <property type="entry name" value="CBM6"/>
</dbReference>
<dbReference type="InterPro" id="IPR006584">
    <property type="entry name" value="Cellulose-bd_IV"/>
</dbReference>
<dbReference type="InterPro" id="IPR013320">
    <property type="entry name" value="ConA-like_dom_sf"/>
</dbReference>
<dbReference type="InterPro" id="IPR008979">
    <property type="entry name" value="Galactose-bd-like_sf"/>
</dbReference>
<dbReference type="InterPro" id="IPR000757">
    <property type="entry name" value="GH16"/>
</dbReference>
<dbReference type="Pfam" id="PF03422">
    <property type="entry name" value="CBM_6"/>
    <property type="match status" value="1"/>
</dbReference>
<dbReference type="SMART" id="SM00606">
    <property type="entry name" value="CBD_IV"/>
    <property type="match status" value="1"/>
</dbReference>
<dbReference type="SUPFAM" id="SSF49899">
    <property type="entry name" value="Concanavalin A-like lectins/glucanases"/>
    <property type="match status" value="1"/>
</dbReference>
<dbReference type="SUPFAM" id="SSF49785">
    <property type="entry name" value="Galactose-binding domain-like"/>
    <property type="match status" value="1"/>
</dbReference>
<dbReference type="PROSITE" id="PS51175">
    <property type="entry name" value="CBM6"/>
    <property type="match status" value="1"/>
</dbReference>
<dbReference type="PROSITE" id="PS51762">
    <property type="entry name" value="GH16_2"/>
    <property type="match status" value="1"/>
</dbReference>
<organism>
    <name type="scientific">Microbulbifer thermotolerans</name>
    <dbReference type="NCBI Taxonomy" id="252514"/>
    <lineage>
        <taxon>Bacteria</taxon>
        <taxon>Pseudomonadati</taxon>
        <taxon>Pseudomonadota</taxon>
        <taxon>Gammaproteobacteria</taxon>
        <taxon>Cellvibrionales</taxon>
        <taxon>Microbulbiferaceae</taxon>
        <taxon>Microbulbifer</taxon>
    </lineage>
</organism>
<gene>
    <name evidence="6 7" type="primary">agaA</name>
</gene>
<accession>Q6F4N4</accession>
<name>AGAA_MICTH</name>
<sequence>MRKITSILLTCVMGCTATYAADWDGVPVPANPGSGKTWELHPLSDDFNYEAPAAGKSTRFYERWKEGFINPWTGPGLTEWHPHYSYVSGGKLAITSGRKPGTNQVYLGSITSKAPLTYPVYMEARAKLSNMVLASDFWFLSADSTEEIDVIEAYGSDRPGQEWYAERLHLSHHVFIRDPFQDYQPTDAGSWYADGKGTKWRDAFHRVGVYWRDPWHLEYYVDGKLVRTVSGQDIIDPNGFTGGTGLSKPMYAIINMEDQNWRSDNGITPTDAELADPNRNTYYVDWVRFYKPVPINGNATTVELGNFHNTGKDGANVTGDTVLGFNKNGNNINYNTKGDWADYTVNLPAAGEYRVDLVIASPMSSGLGAELTFAGNAAKTVTLSNTGGWESYQTFTLPQTISVSSPGNYNFRLKSTGSSNWQWNGDEIRFVKL</sequence>
<keyword id="KW-0002">3D-structure</keyword>
<keyword id="KW-0903">Direct protein sequencing</keyword>
<keyword id="KW-0326">Glycosidase</keyword>
<keyword id="KW-0378">Hydrolase</keyword>
<keyword id="KW-0574">Periplasm</keyword>
<keyword id="KW-0732">Signal</keyword>
<protein>
    <recommendedName>
        <fullName evidence="6">Beta-agarase AgaA</fullName>
        <ecNumber evidence="3">3.2.1.81</ecNumber>
    </recommendedName>
    <alternativeName>
        <fullName evidence="8">MtAgaA</fullName>
    </alternativeName>
</protein>
<evidence type="ECO:0000255" key="1">
    <source>
        <dbReference type="PROSITE-ProRule" id="PRU00523"/>
    </source>
</evidence>
<evidence type="ECO:0000255" key="2">
    <source>
        <dbReference type="PROSITE-ProRule" id="PRU01098"/>
    </source>
</evidence>
<evidence type="ECO:0000269" key="3">
    <source>
    </source>
</evidence>
<evidence type="ECO:0000269" key="4">
    <source>
    </source>
</evidence>
<evidence type="ECO:0000269" key="5">
    <source>
    </source>
</evidence>
<evidence type="ECO:0000303" key="6">
    <source>
    </source>
</evidence>
<evidence type="ECO:0000303" key="7">
    <source>
    </source>
</evidence>
<evidence type="ECO:0000303" key="8">
    <source>
    </source>
</evidence>
<evidence type="ECO:0000305" key="9"/>
<evidence type="ECO:0000305" key="10">
    <source>
    </source>
</evidence>
<evidence type="ECO:0000312" key="11">
    <source>
        <dbReference type="EMBL" id="BAD29947.1"/>
    </source>
</evidence>
<evidence type="ECO:0000312" key="12">
    <source>
        <dbReference type="EMBL" id="BAK08910.1"/>
    </source>
</evidence>
<evidence type="ECO:0007744" key="13">
    <source>
        <dbReference type="PDB" id="3WZ1"/>
    </source>
</evidence>
<evidence type="ECO:0007829" key="14">
    <source>
        <dbReference type="PDB" id="3WZ1"/>
    </source>
</evidence>
<comment type="function">
    <text evidence="3">Endo-type beta-agarase, which produces neoagarotetraose (NA4) as the main final product, with a small amount of neoagarohexaose (NA6) and neoagarobiose (NA2).</text>
</comment>
<comment type="catalytic activity">
    <reaction evidence="3">
        <text>Hydrolysis of (1-&gt;4)-beta-D-galactosidic linkages in agarose, giving the tetramer as the predominant product.</text>
        <dbReference type="EC" id="3.2.1.81"/>
    </reaction>
</comment>
<comment type="activity regulation">
    <text evidence="3">Activity is abolished by Hg(2+), Cu(2+), Pb(2+) and Zn(2+) ions, but is not affected by NaCl up to at least 1.0 M, Mg(2+), K(+) and Ca(2+) (PubMed:15170112). Not affected by iodoacetamide, p-chloromercuribenzoate, dithiothreitol, 2-mercaptoethanol, EDTA and sodium dodecyl sulfate (PubMed:15170112). Inhibited by N-bromosuccinimide (PubMed:15170112).</text>
</comment>
<comment type="biophysicochemical properties">
    <kinetics>
        <KM evidence="3">4.8 mg/ml for agar</KM>
        <KM evidence="3">87.6 mg/ml for neoagarohexaose</KM>
        <text evidence="3">The catalytic efficiency for agar is 3 orders of magnitude greater than that for neoagarohexaose.</text>
    </kinetics>
    <phDependence>
        <text evidence="3">Optimum pH is around 7.0.</text>
    </phDependence>
    <temperatureDependence>
        <text evidence="3">Optimum temperature is around 55 degrees Celsius (PubMed:15170112). Is stable up to 60 degrees Celsius and retains more than 80% of the original activity even after heating at 65 degrees Celsius for 15 min (PubMed:15170112).</text>
    </temperatureDependence>
</comment>
<comment type="subunit">
    <text evidence="10">Monomer.</text>
</comment>
<comment type="subcellular location">
    <subcellularLocation>
        <location evidence="9">Periplasm</location>
    </subcellularLocation>
</comment>
<comment type="domain">
    <text evidence="3 5">The CBM6 domain is not essential for agarolytic activity and may facilitate the reaction by binding to substrates (PubMed:15170112). The thermostability of MtAgaA is likely attributed to a combination of multiple factors including the relatively high numbers of hydrogen bonds and salt bridges, the relatively short length of the surface loops, and the increased number of proline and arginine residues (PubMed:25483365).</text>
</comment>
<comment type="miscellaneous">
    <text evidence="3 5">Recombinant agarase was produced extracellularly using B.subtilis as a host (PubMed:15170112, PubMed:25483365). The protein expressed in B.subtilis was detected as the catalytic domain composed of amino acid residues from 19 to 300, probably due to proteolytic cleavage (PubMed:15170112, PubMed:25483365).</text>
</comment>
<comment type="similarity">
    <text evidence="2">Belongs to the glycosyl hydrolase 16 family.</text>
</comment>
<feature type="signal peptide" evidence="4">
    <location>
        <begin position="1"/>
        <end position="20"/>
    </location>
</feature>
<feature type="chain" id="PRO_5010506679" description="Beta-agarase AgaA">
    <location>
        <begin position="21"/>
        <end position="433"/>
    </location>
</feature>
<feature type="domain" description="GH16" evidence="2">
    <location>
        <begin position="21"/>
        <end position="295"/>
    </location>
</feature>
<feature type="domain" description="CBM6" evidence="1">
    <location>
        <begin position="300"/>
        <end position="431"/>
    </location>
</feature>
<feature type="active site" description="Nucleophile" evidence="2">
    <location>
        <position position="147"/>
    </location>
</feature>
<feature type="active site" description="Proton donor" evidence="2">
    <location>
        <position position="152"/>
    </location>
</feature>
<feature type="turn" evidence="14">
    <location>
        <begin position="22"/>
        <end position="25"/>
    </location>
</feature>
<feature type="strand" evidence="14">
    <location>
        <begin position="36"/>
        <end position="40"/>
    </location>
</feature>
<feature type="turn" evidence="14">
    <location>
        <begin position="53"/>
        <end position="55"/>
    </location>
</feature>
<feature type="helix" evidence="14">
    <location>
        <begin position="58"/>
        <end position="63"/>
    </location>
</feature>
<feature type="strand" evidence="14">
    <location>
        <begin position="64"/>
        <end position="67"/>
    </location>
</feature>
<feature type="strand" evidence="14">
    <location>
        <begin position="69"/>
        <end position="71"/>
    </location>
</feature>
<feature type="strand" evidence="14">
    <location>
        <begin position="78"/>
        <end position="80"/>
    </location>
</feature>
<feature type="helix" evidence="14">
    <location>
        <begin position="82"/>
        <end position="84"/>
    </location>
</feature>
<feature type="strand" evidence="14">
    <location>
        <begin position="85"/>
        <end position="88"/>
    </location>
</feature>
<feature type="strand" evidence="14">
    <location>
        <begin position="91"/>
        <end position="94"/>
    </location>
</feature>
<feature type="strand" evidence="14">
    <location>
        <begin position="96"/>
        <end position="98"/>
    </location>
</feature>
<feature type="strand" evidence="14">
    <location>
        <begin position="105"/>
        <end position="107"/>
    </location>
</feature>
<feature type="strand" evidence="14">
    <location>
        <begin position="109"/>
        <end position="114"/>
    </location>
</feature>
<feature type="strand" evidence="14">
    <location>
        <begin position="118"/>
        <end position="127"/>
    </location>
</feature>
<feature type="strand" evidence="14">
    <location>
        <begin position="130"/>
        <end position="141"/>
    </location>
</feature>
<feature type="strand" evidence="14">
    <location>
        <begin position="144"/>
        <end position="153"/>
    </location>
</feature>
<feature type="helix" evidence="14">
    <location>
        <begin position="162"/>
        <end position="165"/>
    </location>
</feature>
<feature type="strand" evidence="14">
    <location>
        <begin position="171"/>
        <end position="176"/>
    </location>
</feature>
<feature type="turn" evidence="14">
    <location>
        <begin position="177"/>
        <end position="180"/>
    </location>
</feature>
<feature type="strand" evidence="14">
    <location>
        <begin position="181"/>
        <end position="183"/>
    </location>
</feature>
<feature type="helix" evidence="14">
    <location>
        <begin position="188"/>
        <end position="190"/>
    </location>
</feature>
<feature type="helix" evidence="14">
    <location>
        <begin position="200"/>
        <end position="202"/>
    </location>
</feature>
<feature type="strand" evidence="14">
    <location>
        <begin position="205"/>
        <end position="213"/>
    </location>
</feature>
<feature type="strand" evidence="14">
    <location>
        <begin position="216"/>
        <end position="221"/>
    </location>
</feature>
<feature type="strand" evidence="14">
    <location>
        <begin position="224"/>
        <end position="231"/>
    </location>
</feature>
<feature type="helix" evidence="14">
    <location>
        <begin position="232"/>
        <end position="235"/>
    </location>
</feature>
<feature type="turn" evidence="14">
    <location>
        <begin position="240"/>
        <end position="243"/>
    </location>
</feature>
<feature type="strand" evidence="14">
    <location>
        <begin position="250"/>
        <end position="257"/>
    </location>
</feature>
<feature type="helix" evidence="14">
    <location>
        <begin position="260"/>
        <end position="263"/>
    </location>
</feature>
<feature type="turn" evidence="14">
    <location>
        <begin position="264"/>
        <end position="266"/>
    </location>
</feature>
<feature type="helix" evidence="14">
    <location>
        <begin position="271"/>
        <end position="274"/>
    </location>
</feature>
<feature type="turn" evidence="14">
    <location>
        <begin position="277"/>
        <end position="279"/>
    </location>
</feature>
<feature type="strand" evidence="14">
    <location>
        <begin position="282"/>
        <end position="294"/>
    </location>
</feature>
<reference evidence="11" key="1">
    <citation type="journal article" date="2004" name="Biosci. Biotechnol. Biochem.">
        <title>Enzymatic properties and nucleotide and amino acid sequences of a thermostable beta-agarase from the novel marine isolate, JAMB-A94.</title>
        <authorList>
            <person name="Ohta Y."/>
            <person name="Nogi Y."/>
            <person name="Miyazaki M."/>
            <person name="Li Z."/>
            <person name="Hatada Y."/>
            <person name="Ito S."/>
            <person name="Horikoshi K."/>
        </authorList>
    </citation>
    <scope>NUCLEOTIDE SEQUENCE [GENOMIC DNA]</scope>
    <scope>PROTEIN SEQUENCE OF N-TERMINUS</scope>
    <scope>FUNCTION</scope>
    <scope>CATALYTIC ACTIVITY</scope>
    <scope>ACTIVITY REGULATION</scope>
    <scope>BIOPHYSICOCHEMICAL PROPERTIES</scope>
    <scope>DOMAIN</scope>
    <source>
        <strain>DSM 19189 / JCM 14709 / JAMB A94</strain>
    </source>
</reference>
<reference evidence="12" key="2">
    <citation type="journal article" date="2011" name="Mar. Biotechnol.">
        <title>Hyper-production and characterization of the iota-carrageenase useful for iota-carrageenan oligosaccharide production from a deep-sea bacterium, Microbulbifer thermotolerans JAMB-A94T, and insight into the unusual catalytic mechanism.</title>
        <authorList>
            <person name="Hatada Y."/>
            <person name="Mizuno M."/>
            <person name="Li Z."/>
            <person name="Ohta Y."/>
        </authorList>
    </citation>
    <scope>NUCLEOTIDE SEQUENCE [GENOMIC DNA]</scope>
    <source>
        <strain>DSM 19189 / JCM 14709 / JAMB A94</strain>
    </source>
</reference>
<reference key="3">
    <citation type="journal article" date="2004" name="Appl. Microbiol. Biotechnol.">
        <title>Cloning, expression, and characterization of a glycoside hydrolase family 86 beta-agarase from a deep-sea Microbulbifer-like isolate.</title>
        <authorList>
            <person name="Ohta Y."/>
            <person name="Hatada Y."/>
            <person name="Nogi Y."/>
            <person name="Li Z."/>
            <person name="Ito S."/>
            <person name="Horikoshi K."/>
        </authorList>
    </citation>
    <scope>PROTEIN SEQUENCE OF 21-30</scope>
    <source>
        <strain>DSM 19189 / JCM 14709 / JAMB A94</strain>
    </source>
</reference>
<reference evidence="13" key="4">
    <citation type="journal article" date="2015" name="Biosci. Biotechnol. Biochem.">
        <title>Crystal structure of the catalytic domain of a GH16 beta-agarase from a deep-sea bacterium, Microbulbifer thermotolerans JAMB-A94.</title>
        <authorList>
            <person name="Takagi E."/>
            <person name="Hatada Y."/>
            <person name="Akita M."/>
            <person name="Ohta Y."/>
            <person name="Yokoi G."/>
            <person name="Miyazaki T."/>
            <person name="Nishikawa A."/>
            <person name="Tonozuka T."/>
        </authorList>
    </citation>
    <scope>X-RAY CRYSTALLOGRAPHY (1.60 ANGSTROMS) OF 19-300</scope>
    <scope>DOMAIN</scope>
    <source>
        <strain>DSM 19189 / JCM 14709 / JAMB A94</strain>
    </source>
</reference>